<protein>
    <recommendedName>
        <fullName evidence="1">Large ribosomal subunit protein uL13</fullName>
    </recommendedName>
    <alternativeName>
        <fullName evidence="3">50S ribosomal protein L13</fullName>
    </alternativeName>
</protein>
<gene>
    <name evidence="1" type="primary">rplM</name>
    <name type="ordered locus">APH_1108</name>
</gene>
<name>RL13_ANAPZ</name>
<keyword id="KW-0687">Ribonucleoprotein</keyword>
<keyword id="KW-0689">Ribosomal protein</keyword>
<organism>
    <name type="scientific">Anaplasma phagocytophilum (strain HZ)</name>
    <dbReference type="NCBI Taxonomy" id="212042"/>
    <lineage>
        <taxon>Bacteria</taxon>
        <taxon>Pseudomonadati</taxon>
        <taxon>Pseudomonadota</taxon>
        <taxon>Alphaproteobacteria</taxon>
        <taxon>Rickettsiales</taxon>
        <taxon>Anaplasmataceae</taxon>
        <taxon>Anaplasma</taxon>
        <taxon>phagocytophilum group</taxon>
    </lineage>
</organism>
<reference key="1">
    <citation type="journal article" date="2006" name="PLoS Genet.">
        <title>Comparative genomics of emerging human ehrlichiosis agents.</title>
        <authorList>
            <person name="Dunning Hotopp J.C."/>
            <person name="Lin M."/>
            <person name="Madupu R."/>
            <person name="Crabtree J."/>
            <person name="Angiuoli S.V."/>
            <person name="Eisen J.A."/>
            <person name="Seshadri R."/>
            <person name="Ren Q."/>
            <person name="Wu M."/>
            <person name="Utterback T.R."/>
            <person name="Smith S."/>
            <person name="Lewis M."/>
            <person name="Khouri H."/>
            <person name="Zhang C."/>
            <person name="Niu H."/>
            <person name="Lin Q."/>
            <person name="Ohashi N."/>
            <person name="Zhi N."/>
            <person name="Nelson W.C."/>
            <person name="Brinkac L.M."/>
            <person name="Dodson R.J."/>
            <person name="Rosovitz M.J."/>
            <person name="Sundaram J.P."/>
            <person name="Daugherty S.C."/>
            <person name="Davidsen T."/>
            <person name="Durkin A.S."/>
            <person name="Gwinn M.L."/>
            <person name="Haft D.H."/>
            <person name="Selengut J.D."/>
            <person name="Sullivan S.A."/>
            <person name="Zafar N."/>
            <person name="Zhou L."/>
            <person name="Benahmed F."/>
            <person name="Forberger H."/>
            <person name="Halpin R."/>
            <person name="Mulligan S."/>
            <person name="Robinson J."/>
            <person name="White O."/>
            <person name="Rikihisa Y."/>
            <person name="Tettelin H."/>
        </authorList>
    </citation>
    <scope>NUCLEOTIDE SEQUENCE [LARGE SCALE GENOMIC DNA]</scope>
    <source>
        <strain>HZ</strain>
    </source>
</reference>
<sequence length="158" mass="17715">MRTFSLKAGEIDKRWVLIDASDMVVGRLAAYIATILRGKHKPEYTPHMDCGDNVVVVNASSVKFTRNKMRDKVYYRHTGYPGGLKSCTPNDMLRAGYAERIIKVAVWRMLGDGPLARRRFKNLKVYSGPEHGHHAQKPVALDFGAMNNKNGRGNNAGR</sequence>
<evidence type="ECO:0000255" key="1">
    <source>
        <dbReference type="HAMAP-Rule" id="MF_01366"/>
    </source>
</evidence>
<evidence type="ECO:0000256" key="2">
    <source>
        <dbReference type="SAM" id="MobiDB-lite"/>
    </source>
</evidence>
<evidence type="ECO:0000305" key="3"/>
<dbReference type="EMBL" id="CP000235">
    <property type="protein sequence ID" value="ABD43554.1"/>
    <property type="molecule type" value="Genomic_DNA"/>
</dbReference>
<dbReference type="RefSeq" id="WP_011451163.1">
    <property type="nucleotide sequence ID" value="NC_007797.1"/>
</dbReference>
<dbReference type="SMR" id="Q2GIZ5"/>
<dbReference type="STRING" id="212042.APH_1108"/>
<dbReference type="PaxDb" id="212042-APH_1108"/>
<dbReference type="EnsemblBacteria" id="ABD43554">
    <property type="protein sequence ID" value="ABD43554"/>
    <property type="gene ID" value="APH_1108"/>
</dbReference>
<dbReference type="KEGG" id="aph:APH_1108"/>
<dbReference type="eggNOG" id="COG0102">
    <property type="taxonomic scope" value="Bacteria"/>
</dbReference>
<dbReference type="HOGENOM" id="CLU_082184_2_2_5"/>
<dbReference type="Proteomes" id="UP000001943">
    <property type="component" value="Chromosome"/>
</dbReference>
<dbReference type="GO" id="GO:0022625">
    <property type="term" value="C:cytosolic large ribosomal subunit"/>
    <property type="evidence" value="ECO:0007669"/>
    <property type="project" value="TreeGrafter"/>
</dbReference>
<dbReference type="GO" id="GO:0003729">
    <property type="term" value="F:mRNA binding"/>
    <property type="evidence" value="ECO:0007669"/>
    <property type="project" value="TreeGrafter"/>
</dbReference>
<dbReference type="GO" id="GO:0003735">
    <property type="term" value="F:structural constituent of ribosome"/>
    <property type="evidence" value="ECO:0007669"/>
    <property type="project" value="InterPro"/>
</dbReference>
<dbReference type="GO" id="GO:0017148">
    <property type="term" value="P:negative regulation of translation"/>
    <property type="evidence" value="ECO:0007669"/>
    <property type="project" value="TreeGrafter"/>
</dbReference>
<dbReference type="GO" id="GO:0006412">
    <property type="term" value="P:translation"/>
    <property type="evidence" value="ECO:0007669"/>
    <property type="project" value="UniProtKB-UniRule"/>
</dbReference>
<dbReference type="CDD" id="cd00392">
    <property type="entry name" value="Ribosomal_L13"/>
    <property type="match status" value="1"/>
</dbReference>
<dbReference type="Gene3D" id="3.90.1180.10">
    <property type="entry name" value="Ribosomal protein L13"/>
    <property type="match status" value="1"/>
</dbReference>
<dbReference type="HAMAP" id="MF_01366">
    <property type="entry name" value="Ribosomal_uL13"/>
    <property type="match status" value="1"/>
</dbReference>
<dbReference type="InterPro" id="IPR005822">
    <property type="entry name" value="Ribosomal_uL13"/>
</dbReference>
<dbReference type="InterPro" id="IPR005823">
    <property type="entry name" value="Ribosomal_uL13_bac-type"/>
</dbReference>
<dbReference type="InterPro" id="IPR036899">
    <property type="entry name" value="Ribosomal_uL13_sf"/>
</dbReference>
<dbReference type="NCBIfam" id="TIGR01066">
    <property type="entry name" value="rplM_bact"/>
    <property type="match status" value="1"/>
</dbReference>
<dbReference type="PANTHER" id="PTHR11545:SF2">
    <property type="entry name" value="LARGE RIBOSOMAL SUBUNIT PROTEIN UL13M"/>
    <property type="match status" value="1"/>
</dbReference>
<dbReference type="PANTHER" id="PTHR11545">
    <property type="entry name" value="RIBOSOMAL PROTEIN L13"/>
    <property type="match status" value="1"/>
</dbReference>
<dbReference type="Pfam" id="PF00572">
    <property type="entry name" value="Ribosomal_L13"/>
    <property type="match status" value="1"/>
</dbReference>
<dbReference type="PIRSF" id="PIRSF002181">
    <property type="entry name" value="Ribosomal_L13"/>
    <property type="match status" value="1"/>
</dbReference>
<dbReference type="SUPFAM" id="SSF52161">
    <property type="entry name" value="Ribosomal protein L13"/>
    <property type="match status" value="1"/>
</dbReference>
<feature type="chain" id="PRO_1000055338" description="Large ribosomal subunit protein uL13">
    <location>
        <begin position="1"/>
        <end position="158"/>
    </location>
</feature>
<feature type="region of interest" description="Disordered" evidence="2">
    <location>
        <begin position="129"/>
        <end position="158"/>
    </location>
</feature>
<feature type="compositionally biased region" description="Low complexity" evidence="2">
    <location>
        <begin position="144"/>
        <end position="158"/>
    </location>
</feature>
<proteinExistence type="inferred from homology"/>
<accession>Q2GIZ5</accession>
<comment type="function">
    <text evidence="1">This protein is one of the early assembly proteins of the 50S ribosomal subunit, although it is not seen to bind rRNA by itself. It is important during the early stages of 50S assembly.</text>
</comment>
<comment type="subunit">
    <text evidence="1">Part of the 50S ribosomal subunit.</text>
</comment>
<comment type="similarity">
    <text evidence="1">Belongs to the universal ribosomal protein uL13 family.</text>
</comment>